<gene>
    <name evidence="2" type="primary">GSKIP</name>
    <name type="ORF">QtsA-13786</name>
</gene>
<reference key="1">
    <citation type="submission" date="2005-06" db="EMBL/GenBank/DDBJ databases">
        <title>DNA sequences of macaque genes expressed in brain or testis and its evolutionary implications.</title>
        <authorList>
            <consortium name="International consortium for macaque cDNA sequencing and analysis"/>
        </authorList>
    </citation>
    <scope>NUCLEOTIDE SEQUENCE [LARGE SCALE MRNA]</scope>
    <source>
        <tissue>Testis</tissue>
    </source>
</reference>
<evidence type="ECO:0000250" key="1">
    <source>
        <dbReference type="UniProtKB" id="Q8BGR8"/>
    </source>
</evidence>
<evidence type="ECO:0000250" key="2">
    <source>
        <dbReference type="UniProtKB" id="Q9P0R6"/>
    </source>
</evidence>
<evidence type="ECO:0000256" key="3">
    <source>
        <dbReference type="SAM" id="MobiDB-lite"/>
    </source>
</evidence>
<evidence type="ECO:0000305" key="4"/>
<accession>Q4R812</accession>
<proteinExistence type="evidence at transcript level"/>
<keyword id="KW-0963">Cytoplasm</keyword>
<keyword id="KW-0539">Nucleus</keyword>
<keyword id="KW-1185">Reference proteome</keyword>
<protein>
    <recommendedName>
        <fullName evidence="2">GSK3-beta interaction protein</fullName>
        <shortName evidence="2">GSKIP</shortName>
    </recommendedName>
</protein>
<feature type="chain" id="PRO_0000359875" description="GSK3-beta interaction protein">
    <location>
        <begin position="1"/>
        <end position="139"/>
    </location>
</feature>
<feature type="region of interest" description="Disordered" evidence="3">
    <location>
        <begin position="1"/>
        <end position="22"/>
    </location>
</feature>
<feature type="region of interest" description="Required for PRKAR2A interaction; contributes to a protective effect against H(2)O(2)-induced apoptosis" evidence="2">
    <location>
        <begin position="41"/>
        <end position="45"/>
    </location>
</feature>
<feature type="region of interest" description="Interaction with GSK3B and acts as a GSK3B inhibitor" evidence="2">
    <location>
        <begin position="115"/>
        <end position="139"/>
    </location>
</feature>
<feature type="site" description="Required for GSK3B interaction; contributes to a protective effect against H(2)O(2)-induced apoptosis" evidence="2">
    <location>
        <position position="130"/>
    </location>
</feature>
<name>GSKIP_MACFA</name>
<dbReference type="EMBL" id="AB168649">
    <property type="protein sequence ID" value="BAE00760.1"/>
    <property type="molecule type" value="mRNA"/>
</dbReference>
<dbReference type="RefSeq" id="NP_001270488.1">
    <property type="nucleotide sequence ID" value="NM_001283559.1"/>
</dbReference>
<dbReference type="BMRB" id="Q4R812"/>
<dbReference type="SMR" id="Q4R812"/>
<dbReference type="STRING" id="9541.ENSMFAP00000044094"/>
<dbReference type="eggNOG" id="KOG3965">
    <property type="taxonomic scope" value="Eukaryota"/>
</dbReference>
<dbReference type="OrthoDB" id="5804279at2759"/>
<dbReference type="Proteomes" id="UP000233100">
    <property type="component" value="Unplaced"/>
</dbReference>
<dbReference type="GO" id="GO:0005737">
    <property type="term" value="C:cytoplasm"/>
    <property type="evidence" value="ECO:0000250"/>
    <property type="project" value="UniProtKB"/>
</dbReference>
<dbReference type="GO" id="GO:0005634">
    <property type="term" value="C:nucleus"/>
    <property type="evidence" value="ECO:0000250"/>
    <property type="project" value="UniProtKB"/>
</dbReference>
<dbReference type="GO" id="GO:0051018">
    <property type="term" value="F:protein kinase A binding"/>
    <property type="evidence" value="ECO:0007669"/>
    <property type="project" value="TreeGrafter"/>
</dbReference>
<dbReference type="GO" id="GO:0004860">
    <property type="term" value="F:protein kinase inhibitor activity"/>
    <property type="evidence" value="ECO:0000250"/>
    <property type="project" value="UniProtKB"/>
</dbReference>
<dbReference type="GO" id="GO:0008631">
    <property type="term" value="P:intrinsic apoptotic signaling pathway in response to oxidative stress"/>
    <property type="evidence" value="ECO:0000250"/>
    <property type="project" value="UniProtKB"/>
</dbReference>
<dbReference type="GO" id="GO:0006469">
    <property type="term" value="P:negative regulation of protein kinase activity"/>
    <property type="evidence" value="ECO:0000250"/>
    <property type="project" value="UniProtKB"/>
</dbReference>
<dbReference type="GO" id="GO:0090263">
    <property type="term" value="P:positive regulation of canonical Wnt signaling pathway"/>
    <property type="evidence" value="ECO:0000250"/>
    <property type="project" value="UniProtKB"/>
</dbReference>
<dbReference type="GO" id="GO:0030111">
    <property type="term" value="P:regulation of Wnt signaling pathway"/>
    <property type="evidence" value="ECO:0000250"/>
    <property type="project" value="UniProtKB"/>
</dbReference>
<dbReference type="FunFam" id="3.30.2280.10:FF:000003">
    <property type="entry name" value="GSK3-beta interaction protein"/>
    <property type="match status" value="1"/>
</dbReference>
<dbReference type="Gene3D" id="3.30.2280.10">
    <property type="entry name" value="Hypothetical protein (hspc210)"/>
    <property type="match status" value="1"/>
</dbReference>
<dbReference type="InterPro" id="IPR037395">
    <property type="entry name" value="GSKIP"/>
</dbReference>
<dbReference type="InterPro" id="IPR007967">
    <property type="entry name" value="GSKIP_dom"/>
</dbReference>
<dbReference type="InterPro" id="IPR023231">
    <property type="entry name" value="GSKIP_dom_sf"/>
</dbReference>
<dbReference type="PANTHER" id="PTHR12490">
    <property type="entry name" value="GSK3B-INTERACTING PROTEIN"/>
    <property type="match status" value="1"/>
</dbReference>
<dbReference type="PANTHER" id="PTHR12490:SF4">
    <property type="entry name" value="GSK3B-INTERACTING PROTEIN"/>
    <property type="match status" value="1"/>
</dbReference>
<dbReference type="Pfam" id="PF05303">
    <property type="entry name" value="GSKIP_dom"/>
    <property type="match status" value="1"/>
</dbReference>
<dbReference type="SUPFAM" id="SSF103107">
    <property type="entry name" value="Hypothetical protein c14orf129, hspc210"/>
    <property type="match status" value="1"/>
</dbReference>
<comment type="function">
    <text evidence="1 2">A-kinase anchoring protein for GSK3B and PKA that regulates or facilitates their kinase activity towards their targets. The ternary complex enhances Wnt-induced signaling by facilitating the GSK3B- and PKA-induced phosphorylation of beta-catenin leading to beta-catenin degradation and stabilization respectively. Upon cAMP activation, the ternary complex contributes to neuroprotection against oxidative stress-induced apoptosis by facilitating the PKA-induced phosphorylation of DML1 and PKA-induced inactivation of GSK3B. During neurite outgrowth promotes neuron proliferation; while increases beta-catenin-induced transcriptional activity through GSK3B kinase activity inhibition, reduces N-cadherin level to promote cell cycle progression (By similarity). May play a role in cleft palate formation and is required for postnatal life through modulation of the activity of GSK3B during development (By similarity).</text>
</comment>
<comment type="subunit">
    <text evidence="2">Forms a complex composed of PRKAR2A or PRKAR2B, GSK3B and GSKIP through GSKIP interaction; facilitates PKA-induced phosphorylation of GSK3B leading to GSK3B inactivation; recruits DNM1L through GSK3B for PKA-mediated phosphorylation of DNM1L; promotes beta-catenin degradation through GSK3B-induced phosphorylation of beta-catenin; stabilizes beta-catenin and enhances Wnt-induced signaling through PKA-induced phosphorylation of beta-catenin. Interacts with GSK3B; induces GSK3B-mediated phosphorylation of GSKIP and inhibits GSK3B kinase activity.</text>
</comment>
<comment type="subcellular location">
    <subcellularLocation>
        <location evidence="2">Cytoplasm</location>
    </subcellularLocation>
    <subcellularLocation>
        <location evidence="2">Nucleus</location>
    </subcellularLocation>
</comment>
<comment type="PTM">
    <text evidence="2">Phosphorylated by GSK3B.</text>
</comment>
<comment type="similarity">
    <text evidence="4">Belongs to the GSKIP family.</text>
</comment>
<organism>
    <name type="scientific">Macaca fascicularis</name>
    <name type="common">Crab-eating macaque</name>
    <name type="synonym">Cynomolgus monkey</name>
    <dbReference type="NCBI Taxonomy" id="9541"/>
    <lineage>
        <taxon>Eukaryota</taxon>
        <taxon>Metazoa</taxon>
        <taxon>Chordata</taxon>
        <taxon>Craniata</taxon>
        <taxon>Vertebrata</taxon>
        <taxon>Euteleostomi</taxon>
        <taxon>Mammalia</taxon>
        <taxon>Eutheria</taxon>
        <taxon>Euarchontoglires</taxon>
        <taxon>Primates</taxon>
        <taxon>Haplorrhini</taxon>
        <taxon>Catarrhini</taxon>
        <taxon>Cercopithecidae</taxon>
        <taxon>Cercopithecinae</taxon>
        <taxon>Macaca</taxon>
    </lineage>
</organism>
<sequence>METDCNPMELSSMSGFEEGSELNGFEGTDMKDMRLEAEAVVNDVLFAVNNMFVSKSLRCADDVAYINVETKERNRYCLELTEAGLKVVGYDFDQVDDHLQTPYHETVYSLLDTLSPAYREAFGNALLQRLEALKRDGQS</sequence>